<keyword id="KW-0067">ATP-binding</keyword>
<keyword id="KW-0963">Cytoplasm</keyword>
<keyword id="KW-0275">Fatty acid biosynthesis</keyword>
<keyword id="KW-0276">Fatty acid metabolism</keyword>
<keyword id="KW-0444">Lipid biosynthesis</keyword>
<keyword id="KW-0443">Lipid metabolism</keyword>
<keyword id="KW-0479">Metal-binding</keyword>
<keyword id="KW-0547">Nucleotide-binding</keyword>
<keyword id="KW-0808">Transferase</keyword>
<keyword id="KW-0862">Zinc</keyword>
<keyword id="KW-0863">Zinc-finger</keyword>
<dbReference type="EC" id="2.1.3.15" evidence="1"/>
<dbReference type="EMBL" id="CP000627">
    <property type="protein sequence ID" value="ABQ20465.1"/>
    <property type="molecule type" value="Genomic_DNA"/>
</dbReference>
<dbReference type="EMBL" id="CP001235">
    <property type="protein sequence ID" value="ACP09027.1"/>
    <property type="molecule type" value="Genomic_DNA"/>
</dbReference>
<dbReference type="RefSeq" id="WP_000118596.1">
    <property type="nucleotide sequence ID" value="NZ_JAACZH010000005.1"/>
</dbReference>
<dbReference type="SMR" id="A5F2T5"/>
<dbReference type="GeneID" id="89514895"/>
<dbReference type="KEGG" id="vco:VC0395_A0521"/>
<dbReference type="KEGG" id="vcr:VC395_1015"/>
<dbReference type="PATRIC" id="fig|345073.21.peg.985"/>
<dbReference type="eggNOG" id="COG0777">
    <property type="taxonomic scope" value="Bacteria"/>
</dbReference>
<dbReference type="HOGENOM" id="CLU_015486_1_3_6"/>
<dbReference type="OrthoDB" id="9772975at2"/>
<dbReference type="UniPathway" id="UPA00655">
    <property type="reaction ID" value="UER00711"/>
</dbReference>
<dbReference type="Proteomes" id="UP000000249">
    <property type="component" value="Chromosome 2"/>
</dbReference>
<dbReference type="GO" id="GO:0009329">
    <property type="term" value="C:acetate CoA-transferase complex"/>
    <property type="evidence" value="ECO:0007669"/>
    <property type="project" value="TreeGrafter"/>
</dbReference>
<dbReference type="GO" id="GO:0003989">
    <property type="term" value="F:acetyl-CoA carboxylase activity"/>
    <property type="evidence" value="ECO:0007669"/>
    <property type="project" value="InterPro"/>
</dbReference>
<dbReference type="GO" id="GO:0005524">
    <property type="term" value="F:ATP binding"/>
    <property type="evidence" value="ECO:0007669"/>
    <property type="project" value="UniProtKB-KW"/>
</dbReference>
<dbReference type="GO" id="GO:0016743">
    <property type="term" value="F:carboxyl- or carbamoyltransferase activity"/>
    <property type="evidence" value="ECO:0007669"/>
    <property type="project" value="UniProtKB-UniRule"/>
</dbReference>
<dbReference type="GO" id="GO:0008270">
    <property type="term" value="F:zinc ion binding"/>
    <property type="evidence" value="ECO:0007669"/>
    <property type="project" value="UniProtKB-UniRule"/>
</dbReference>
<dbReference type="GO" id="GO:0006633">
    <property type="term" value="P:fatty acid biosynthetic process"/>
    <property type="evidence" value="ECO:0007669"/>
    <property type="project" value="UniProtKB-KW"/>
</dbReference>
<dbReference type="GO" id="GO:2001295">
    <property type="term" value="P:malonyl-CoA biosynthetic process"/>
    <property type="evidence" value="ECO:0007669"/>
    <property type="project" value="UniProtKB-UniRule"/>
</dbReference>
<dbReference type="FunFam" id="3.90.226.10:FF:000013">
    <property type="entry name" value="Acetyl-coenzyme A carboxylase carboxyl transferase subunit beta"/>
    <property type="match status" value="1"/>
</dbReference>
<dbReference type="Gene3D" id="3.90.226.10">
    <property type="entry name" value="2-enoyl-CoA Hydratase, Chain A, domain 1"/>
    <property type="match status" value="1"/>
</dbReference>
<dbReference type="HAMAP" id="MF_01395">
    <property type="entry name" value="AcetylCoA_CT_beta"/>
    <property type="match status" value="1"/>
</dbReference>
<dbReference type="InterPro" id="IPR034733">
    <property type="entry name" value="AcCoA_carboxyl_beta"/>
</dbReference>
<dbReference type="InterPro" id="IPR000438">
    <property type="entry name" value="Acetyl_CoA_COase_Trfase_b_su"/>
</dbReference>
<dbReference type="InterPro" id="IPR029045">
    <property type="entry name" value="ClpP/crotonase-like_dom_sf"/>
</dbReference>
<dbReference type="InterPro" id="IPR011762">
    <property type="entry name" value="COA_CT_N"/>
</dbReference>
<dbReference type="InterPro" id="IPR041010">
    <property type="entry name" value="Znf-ACC"/>
</dbReference>
<dbReference type="NCBIfam" id="TIGR00515">
    <property type="entry name" value="accD"/>
    <property type="match status" value="1"/>
</dbReference>
<dbReference type="PANTHER" id="PTHR42995">
    <property type="entry name" value="ACETYL-COENZYME A CARBOXYLASE CARBOXYL TRANSFERASE SUBUNIT BETA, CHLOROPLASTIC"/>
    <property type="match status" value="1"/>
</dbReference>
<dbReference type="PANTHER" id="PTHR42995:SF5">
    <property type="entry name" value="ACETYL-COENZYME A CARBOXYLASE CARBOXYL TRANSFERASE SUBUNIT BETA, CHLOROPLASTIC"/>
    <property type="match status" value="1"/>
</dbReference>
<dbReference type="Pfam" id="PF01039">
    <property type="entry name" value="Carboxyl_trans"/>
    <property type="match status" value="1"/>
</dbReference>
<dbReference type="Pfam" id="PF17848">
    <property type="entry name" value="Zn_ribbon_ACC"/>
    <property type="match status" value="1"/>
</dbReference>
<dbReference type="PRINTS" id="PR01070">
    <property type="entry name" value="ACCCTRFRASEB"/>
</dbReference>
<dbReference type="SUPFAM" id="SSF52096">
    <property type="entry name" value="ClpP/crotonase"/>
    <property type="match status" value="1"/>
</dbReference>
<dbReference type="PROSITE" id="PS50980">
    <property type="entry name" value="COA_CT_NTER"/>
    <property type="match status" value="1"/>
</dbReference>
<feature type="chain" id="PRO_0000359085" description="Acetyl-coenzyme A carboxylase carboxyl transferase subunit beta">
    <location>
        <begin position="1"/>
        <end position="308"/>
    </location>
</feature>
<feature type="domain" description="CoA carboxyltransferase N-terminal" evidence="2">
    <location>
        <begin position="25"/>
        <end position="294"/>
    </location>
</feature>
<feature type="zinc finger region" description="C4-type" evidence="1">
    <location>
        <begin position="29"/>
        <end position="51"/>
    </location>
</feature>
<feature type="binding site" evidence="1">
    <location>
        <position position="29"/>
    </location>
    <ligand>
        <name>Zn(2+)</name>
        <dbReference type="ChEBI" id="CHEBI:29105"/>
    </ligand>
</feature>
<feature type="binding site" evidence="1">
    <location>
        <position position="32"/>
    </location>
    <ligand>
        <name>Zn(2+)</name>
        <dbReference type="ChEBI" id="CHEBI:29105"/>
    </ligand>
</feature>
<feature type="binding site" evidence="1">
    <location>
        <position position="48"/>
    </location>
    <ligand>
        <name>Zn(2+)</name>
        <dbReference type="ChEBI" id="CHEBI:29105"/>
    </ligand>
</feature>
<feature type="binding site" evidence="1">
    <location>
        <position position="51"/>
    </location>
    <ligand>
        <name>Zn(2+)</name>
        <dbReference type="ChEBI" id="CHEBI:29105"/>
    </ligand>
</feature>
<sequence>MSWLEKILEKSNIVSSRKASIPEGVWTKCTSCEQVLYYAELERNLEVCPKCDHHMRMKARRRLETFLDQGERVELGEELEPQDKLKFKDSKRYKERLAAAQKASGEKDALVVMKGAVLGVPVVACAFEFSFMGGSMGSVVGARFVRAVEAAMEHNCGLICFSASGGARMQEALMSLMQMAKTSAALERLSDKGLPFISVMTDPTMGGVSASLAMLGDINIGEPKALIGFAGRRVIEQTVREELPEGFQRSEFLLEHGAIDMIVDRRDMRQRVASLLAKMTGQASPLVVSVNDAPNEAPYAVPEANKKG</sequence>
<proteinExistence type="inferred from homology"/>
<reference key="1">
    <citation type="submission" date="2007-03" db="EMBL/GenBank/DDBJ databases">
        <authorList>
            <person name="Heidelberg J."/>
        </authorList>
    </citation>
    <scope>NUCLEOTIDE SEQUENCE [LARGE SCALE GENOMIC DNA]</scope>
    <source>
        <strain>ATCC 39541 / Classical Ogawa 395 / O395</strain>
    </source>
</reference>
<reference key="2">
    <citation type="journal article" date="2008" name="PLoS ONE">
        <title>A recalibrated molecular clock and independent origins for the cholera pandemic clones.</title>
        <authorList>
            <person name="Feng L."/>
            <person name="Reeves P.R."/>
            <person name="Lan R."/>
            <person name="Ren Y."/>
            <person name="Gao C."/>
            <person name="Zhou Z."/>
            <person name="Ren Y."/>
            <person name="Cheng J."/>
            <person name="Wang W."/>
            <person name="Wang J."/>
            <person name="Qian W."/>
            <person name="Li D."/>
            <person name="Wang L."/>
        </authorList>
    </citation>
    <scope>NUCLEOTIDE SEQUENCE [LARGE SCALE GENOMIC DNA]</scope>
    <source>
        <strain>ATCC 39541 / Classical Ogawa 395 / O395</strain>
    </source>
</reference>
<evidence type="ECO:0000255" key="1">
    <source>
        <dbReference type="HAMAP-Rule" id="MF_01395"/>
    </source>
</evidence>
<evidence type="ECO:0000255" key="2">
    <source>
        <dbReference type="PROSITE-ProRule" id="PRU01136"/>
    </source>
</evidence>
<accession>A5F2T5</accession>
<accession>C3LZ11</accession>
<name>ACCD_VIBC3</name>
<organism>
    <name type="scientific">Vibrio cholerae serotype O1 (strain ATCC 39541 / Classical Ogawa 395 / O395)</name>
    <dbReference type="NCBI Taxonomy" id="345073"/>
    <lineage>
        <taxon>Bacteria</taxon>
        <taxon>Pseudomonadati</taxon>
        <taxon>Pseudomonadota</taxon>
        <taxon>Gammaproteobacteria</taxon>
        <taxon>Vibrionales</taxon>
        <taxon>Vibrionaceae</taxon>
        <taxon>Vibrio</taxon>
    </lineage>
</organism>
<comment type="function">
    <text evidence="1">Component of the acetyl coenzyme A carboxylase (ACC) complex. Biotin carboxylase (BC) catalyzes the carboxylation of biotin on its carrier protein (BCCP) and then the CO(2) group is transferred by the transcarboxylase to acetyl-CoA to form malonyl-CoA.</text>
</comment>
<comment type="catalytic activity">
    <reaction evidence="1">
        <text>N(6)-carboxybiotinyl-L-lysyl-[protein] + acetyl-CoA = N(6)-biotinyl-L-lysyl-[protein] + malonyl-CoA</text>
        <dbReference type="Rhea" id="RHEA:54728"/>
        <dbReference type="Rhea" id="RHEA-COMP:10505"/>
        <dbReference type="Rhea" id="RHEA-COMP:10506"/>
        <dbReference type="ChEBI" id="CHEBI:57288"/>
        <dbReference type="ChEBI" id="CHEBI:57384"/>
        <dbReference type="ChEBI" id="CHEBI:83144"/>
        <dbReference type="ChEBI" id="CHEBI:83145"/>
        <dbReference type="EC" id="2.1.3.15"/>
    </reaction>
</comment>
<comment type="cofactor">
    <cofactor evidence="1">
        <name>Zn(2+)</name>
        <dbReference type="ChEBI" id="CHEBI:29105"/>
    </cofactor>
    <text evidence="1">Binds 1 zinc ion per subunit.</text>
</comment>
<comment type="pathway">
    <text evidence="1">Lipid metabolism; malonyl-CoA biosynthesis; malonyl-CoA from acetyl-CoA: step 1/1.</text>
</comment>
<comment type="subunit">
    <text evidence="1">Acetyl-CoA carboxylase is a heterohexamer composed of biotin carboxyl carrier protein (AccB), biotin carboxylase (AccC) and two subunits each of ACCase subunit alpha (AccA) and ACCase subunit beta (AccD).</text>
</comment>
<comment type="subcellular location">
    <subcellularLocation>
        <location evidence="1">Cytoplasm</location>
    </subcellularLocation>
</comment>
<comment type="similarity">
    <text evidence="1">Belongs to the AccD/PCCB family.</text>
</comment>
<protein>
    <recommendedName>
        <fullName evidence="1">Acetyl-coenzyme A carboxylase carboxyl transferase subunit beta</fullName>
        <shortName evidence="1">ACCase subunit beta</shortName>
        <shortName evidence="1">Acetyl-CoA carboxylase carboxyltransferase subunit beta</shortName>
        <ecNumber evidence="1">2.1.3.15</ecNumber>
    </recommendedName>
</protein>
<gene>
    <name evidence="1" type="primary">accD</name>
    <name type="ordered locus">VC0395_A0521</name>
    <name type="ordered locus">VC395_1015</name>
</gene>